<dbReference type="EC" id="4.2.2.2"/>
<dbReference type="EMBL" id="M80561">
    <property type="protein sequence ID" value="AAA32671.1"/>
    <property type="molecule type" value="mRNA"/>
</dbReference>
<dbReference type="PIR" id="E53240">
    <property type="entry name" value="E53240"/>
</dbReference>
<dbReference type="SMR" id="P27762"/>
<dbReference type="Allergome" id="26">
    <property type="allergen name" value="Amb a 1.0501"/>
</dbReference>
<dbReference type="CAZy" id="PL1">
    <property type="family name" value="Polysaccharide Lyase Family 1"/>
</dbReference>
<dbReference type="UniPathway" id="UPA00545">
    <property type="reaction ID" value="UER00824"/>
</dbReference>
<dbReference type="GO" id="GO:0046872">
    <property type="term" value="F:metal ion binding"/>
    <property type="evidence" value="ECO:0007669"/>
    <property type="project" value="UniProtKB-KW"/>
</dbReference>
<dbReference type="GO" id="GO:0030570">
    <property type="term" value="F:pectate lyase activity"/>
    <property type="evidence" value="ECO:0007669"/>
    <property type="project" value="UniProtKB-EC"/>
</dbReference>
<dbReference type="GO" id="GO:0045490">
    <property type="term" value="P:pectin catabolic process"/>
    <property type="evidence" value="ECO:0007669"/>
    <property type="project" value="UniProtKB-UniPathway"/>
</dbReference>
<dbReference type="Gene3D" id="2.160.20.10">
    <property type="entry name" value="Single-stranded right-handed beta-helix, Pectin lyase-like"/>
    <property type="match status" value="1"/>
</dbReference>
<dbReference type="InterPro" id="IPR018082">
    <property type="entry name" value="AmbAllergen"/>
</dbReference>
<dbReference type="InterPro" id="IPR006626">
    <property type="entry name" value="PbH1"/>
</dbReference>
<dbReference type="InterPro" id="IPR002022">
    <property type="entry name" value="Pec_lyase"/>
</dbReference>
<dbReference type="InterPro" id="IPR012334">
    <property type="entry name" value="Pectin_lyas_fold"/>
</dbReference>
<dbReference type="InterPro" id="IPR011050">
    <property type="entry name" value="Pectin_lyase_fold/virulence"/>
</dbReference>
<dbReference type="InterPro" id="IPR045032">
    <property type="entry name" value="PEL"/>
</dbReference>
<dbReference type="PANTHER" id="PTHR31683:SF159">
    <property type="entry name" value="PECTATE LYASE"/>
    <property type="match status" value="1"/>
</dbReference>
<dbReference type="PANTHER" id="PTHR31683">
    <property type="entry name" value="PECTATE LYASE 18-RELATED"/>
    <property type="match status" value="1"/>
</dbReference>
<dbReference type="Pfam" id="PF00544">
    <property type="entry name" value="Pectate_lyase_4"/>
    <property type="match status" value="1"/>
</dbReference>
<dbReference type="PRINTS" id="PR00807">
    <property type="entry name" value="AMBALLERGEN"/>
</dbReference>
<dbReference type="SMART" id="SM00656">
    <property type="entry name" value="Amb_all"/>
    <property type="match status" value="1"/>
</dbReference>
<dbReference type="SMART" id="SM00710">
    <property type="entry name" value="PbH1"/>
    <property type="match status" value="3"/>
</dbReference>
<dbReference type="SUPFAM" id="SSF51126">
    <property type="entry name" value="Pectin lyase-like"/>
    <property type="match status" value="1"/>
</dbReference>
<reference key="1">
    <citation type="journal article" date="1991" name="J. Immunol.">
        <title>Complete sequence of the allergen Amb alpha II. Recombinant expression and reactivity with T cells from ragweed allergic patients.</title>
        <authorList>
            <person name="Rogers B.L."/>
            <person name="Morgenstern J.P."/>
            <person name="Griffith I.J."/>
            <person name="Yu X.-B."/>
            <person name="Counsell C.M."/>
            <person name="Brauer A.W."/>
            <person name="King T.P."/>
            <person name="Garman R.D."/>
            <person name="Kuo M.-C.C."/>
        </authorList>
    </citation>
    <scope>NUCLEOTIDE SEQUENCE [MRNA]</scope>
    <scope>ALLERGEN</scope>
    <source>
        <tissue>Flower</tissue>
    </source>
</reference>
<reference key="2">
    <citation type="journal article" date="1991" name="Int. Arch. Allergy Appl. Immunol.">
        <title>Sequence polymorphism of Amb a I and Amb a II, the major allergens in Ambrosia artemisiifolia (short ragweed).</title>
        <authorList>
            <person name="Griffith I.J."/>
            <person name="Pollock J."/>
            <person name="Klapper D.G."/>
            <person name="Rogers B.L."/>
            <person name="Nault A.K."/>
        </authorList>
    </citation>
    <scope>NUCLEOTIDE SEQUENCE [MRNA]</scope>
    <scope>VARIANTS</scope>
    <source>
        <tissue>Pollen</tissue>
    </source>
</reference>
<feature type="signal peptide" evidence="2">
    <location>
        <begin position="1"/>
        <end position="25"/>
    </location>
</feature>
<feature type="chain" id="PRO_0000024905" description="Pectate lyase 4">
    <location>
        <begin position="26"/>
        <end position="397"/>
    </location>
</feature>
<feature type="repeat" description="PbH1 1">
    <location>
        <begin position="159"/>
        <end position="202"/>
    </location>
</feature>
<feature type="repeat" description="PbH1 2">
    <location>
        <begin position="203"/>
        <end position="224"/>
    </location>
</feature>
<feature type="repeat" description="PbH1 3">
    <location>
        <begin position="227"/>
        <end position="248"/>
    </location>
</feature>
<feature type="active site" evidence="2">
    <location>
        <position position="274"/>
    </location>
</feature>
<feature type="binding site" evidence="1">
    <location>
        <position position="194"/>
    </location>
    <ligand>
        <name>Ca(2+)</name>
        <dbReference type="ChEBI" id="CHEBI:29108"/>
    </ligand>
</feature>
<feature type="binding site" evidence="1">
    <location>
        <position position="218"/>
    </location>
    <ligand>
        <name>Ca(2+)</name>
        <dbReference type="ChEBI" id="CHEBI:29108"/>
    </ligand>
</feature>
<feature type="binding site" evidence="1">
    <location>
        <position position="222"/>
    </location>
    <ligand>
        <name>Ca(2+)</name>
        <dbReference type="ChEBI" id="CHEBI:29108"/>
    </ligand>
</feature>
<feature type="glycosylation site" description="N-linked (GlcNAc...) asparagine" evidence="2">
    <location>
        <position position="36"/>
    </location>
</feature>
<feature type="disulfide bond" evidence="1">
    <location>
        <begin position="54"/>
        <end position="71"/>
    </location>
</feature>
<feature type="sequence variant" description="Detected only in flower DNA.">
    <original>N</original>
    <variation>D</variation>
    <location>
        <position position="70"/>
    </location>
</feature>
<feature type="sequence variant" description="Detected only in flower DNA.">
    <original>K</original>
    <variation>T</variation>
    <location>
        <position position="138"/>
    </location>
</feature>
<feature type="sequence variant" description="Detected only in flower DNA.">
    <original>K</original>
    <variation>R</variation>
    <location>
        <position position="321"/>
    </location>
</feature>
<name>PLY4_AMBAR</name>
<protein>
    <recommendedName>
        <fullName>Pectate lyase 4</fullName>
        <ecNumber>4.2.2.2</ecNumber>
    </recommendedName>
    <alternativeName>
        <fullName>Antigen Amb a II</fullName>
    </alternativeName>
    <alternativeName>
        <fullName>Antigen K</fullName>
        <shortName>AgK</shortName>
    </alternativeName>
    <alternativeName>
        <fullName>Pollen allergen Amb a 2</fullName>
    </alternativeName>
    <allergenName>Amb a 2</allergenName>
</protein>
<comment type="function">
    <text evidence="1">Has pectate lyase activity.</text>
</comment>
<comment type="catalytic activity">
    <reaction>
        <text>Eliminative cleavage of (1-&gt;4)-alpha-D-galacturonan to give oligosaccharides with 4-deoxy-alpha-D-galact-4-enuronosyl groups at their non-reducing ends.</text>
        <dbReference type="EC" id="4.2.2.2"/>
    </reaction>
</comment>
<comment type="cofactor">
    <cofactor evidence="1">
        <name>Ca(2+)</name>
        <dbReference type="ChEBI" id="CHEBI:29108"/>
    </cofactor>
    <text evidence="1">Binds 1 Ca(2+) ion.</text>
</comment>
<comment type="pathway">
    <text>Glycan metabolism; pectin degradation; 2-dehydro-3-deoxy-D-gluconate from pectin: step 2/5.</text>
</comment>
<comment type="subunit">
    <text>Monomer.</text>
</comment>
<comment type="tissue specificity">
    <text>Pollen and flowers.</text>
</comment>
<comment type="PTM">
    <text>The N-terminus is blocked.</text>
</comment>
<comment type="allergen">
    <text evidence="3">Causes an allergic reaction in human. This is one of the major allergens of the ragweed pollen.</text>
</comment>
<comment type="similarity">
    <text evidence="4">Belongs to the polysaccharide lyase 1 family. Amb a subfamily.</text>
</comment>
<sequence>MGIKHCCYILYFTLALVTLVQAGRLGEEVDILPSPNDTRRSLQGCEAHNIIDKCWRCKPDWAENRQALGNCAQGFGKATHGGKWGDIYMVTSDQDDDVVNPKEGTLRFGATQDRPLWIIFQRDMIIYLQQEMVVTSDKTIDGRGAKVELVYGGITLMNVKNVIIHNIDIHDVRVLPGGRIKSNGGPAIPRHQSDGDAIHVTGSSDIWIDHCTLSKSFDGLVDVNWGSTGVTISNCKFTHHEKAVLLGASDTHFQDLKMHVTLAYNIFTNTVHERMPRCRFGFFQIVNNFYDRWDKYAIGGSSNPTILSQGNKFVAPDFIYKKNVCLRTGAQEPEWMTWNWRTQNDVLENGAIFVASGSDPVLTAEQNAGMMQAEPGDMVPQLTMNAGVLTCSPGAPC</sequence>
<proteinExistence type="evidence at protein level"/>
<evidence type="ECO:0000250" key="1"/>
<evidence type="ECO:0000255" key="2"/>
<evidence type="ECO:0000269" key="3">
    <source>
    </source>
</evidence>
<evidence type="ECO:0000305" key="4"/>
<accession>P27762</accession>
<keyword id="KW-0020">Allergen</keyword>
<keyword id="KW-0106">Calcium</keyword>
<keyword id="KW-1015">Disulfide bond</keyword>
<keyword id="KW-0325">Glycoprotein</keyword>
<keyword id="KW-0456">Lyase</keyword>
<keyword id="KW-0479">Metal-binding</keyword>
<keyword id="KW-0677">Repeat</keyword>
<keyword id="KW-0732">Signal</keyword>
<organism>
    <name type="scientific">Ambrosia artemisiifolia</name>
    <name type="common">Common ragweed</name>
    <dbReference type="NCBI Taxonomy" id="4212"/>
    <lineage>
        <taxon>Eukaryota</taxon>
        <taxon>Viridiplantae</taxon>
        <taxon>Streptophyta</taxon>
        <taxon>Embryophyta</taxon>
        <taxon>Tracheophyta</taxon>
        <taxon>Spermatophyta</taxon>
        <taxon>Magnoliopsida</taxon>
        <taxon>eudicotyledons</taxon>
        <taxon>Gunneridae</taxon>
        <taxon>Pentapetalae</taxon>
        <taxon>asterids</taxon>
        <taxon>campanulids</taxon>
        <taxon>Asterales</taxon>
        <taxon>Asteraceae</taxon>
        <taxon>Asteroideae</taxon>
        <taxon>Heliantheae alliance</taxon>
        <taxon>Heliantheae</taxon>
        <taxon>Ambrosia</taxon>
    </lineage>
</organism>